<sequence length="303" mass="33671">MNRIALVFLYSLFLFNLAIGRVESQTCQCIQPDPSMLNCLGYDSKLQADTIDEAIASFPDLSLNDDVANQKFSTADVGCVTKECQDCRKDMRKQLQKVGLLAKDINDIVASQVDSNSTCTKYGFTRQQQKKSHDDDDDDDDSDSDESKEEEEKKKRDRKHRRDKRQAITQGSQNNTDPNLIGTRFTISCAMKGVSVDPTGTVSLCSSCWVWRQLPSNYRPQYINELVCDNTDSDCLSGYATCSVGHRTFEAIRNDNGVQTQVTLTAGSYCECRISKSSSLQSLVEGTGISGTYNPLSNHTTPV</sequence>
<protein>
    <recommendedName>
        <fullName>Uncharacterized protein T16H12.9</fullName>
    </recommendedName>
</protein>
<keyword id="KW-0325">Glycoprotein</keyword>
<keyword id="KW-1185">Reference proteome</keyword>
<keyword id="KW-0732">Signal</keyword>
<reference key="1">
    <citation type="journal article" date="1998" name="Science">
        <title>Genome sequence of the nematode C. elegans: a platform for investigating biology.</title>
        <authorList>
            <consortium name="The C. elegans sequencing consortium"/>
        </authorList>
    </citation>
    <scope>NUCLEOTIDE SEQUENCE [LARGE SCALE GENOMIC DNA]</scope>
    <source>
        <strain>Bristol N2</strain>
    </source>
</reference>
<reference key="2">
    <citation type="journal article" date="2007" name="Mol. Cell. Proteomics">
        <title>Proteomics reveals N-linked glycoprotein diversity in Caenorhabditis elegans and suggests an atypical translocation mechanism for integral membrane proteins.</title>
        <authorList>
            <person name="Kaji H."/>
            <person name="Kamiie J."/>
            <person name="Kawakami H."/>
            <person name="Kido K."/>
            <person name="Yamauchi Y."/>
            <person name="Shinkawa T."/>
            <person name="Taoka M."/>
            <person name="Takahashi N."/>
            <person name="Isobe T."/>
        </authorList>
    </citation>
    <scope>GLYCOSYLATION [LARGE SCALE ANALYSIS] AT ASN-116</scope>
    <scope>IDENTIFICATION BY MASS SPECTROMETRY</scope>
    <source>
        <strain>Bristol N2</strain>
    </source>
</reference>
<dbReference type="EMBL" id="Z30662">
    <property type="protein sequence ID" value="CAA83142.3"/>
    <property type="molecule type" value="Genomic_DNA"/>
</dbReference>
<dbReference type="EMBL" id="Z47357">
    <property type="protein sequence ID" value="CAA83142.3"/>
    <property type="status" value="JOINED"/>
    <property type="molecule type" value="Genomic_DNA"/>
</dbReference>
<dbReference type="PIR" id="S42381">
    <property type="entry name" value="S42381"/>
</dbReference>
<dbReference type="PIR" id="T27700">
    <property type="entry name" value="T27700"/>
</dbReference>
<dbReference type="RefSeq" id="NP_499244.2">
    <property type="nucleotide sequence ID" value="NM_066843.4"/>
</dbReference>
<dbReference type="FunCoup" id="P34572">
    <property type="interactions" value="153"/>
</dbReference>
<dbReference type="STRING" id="6239.T16H12.9.1"/>
<dbReference type="iPTMnet" id="P34572"/>
<dbReference type="PaxDb" id="6239-T16H12.9"/>
<dbReference type="EnsemblMetazoa" id="T16H12.9.1">
    <property type="protein sequence ID" value="T16H12.9.1"/>
    <property type="gene ID" value="WBGene00011817"/>
</dbReference>
<dbReference type="GeneID" id="188562"/>
<dbReference type="KEGG" id="cel:CELE_T16H12.9"/>
<dbReference type="UCSC" id="T16H12.9">
    <property type="organism name" value="c. elegans"/>
</dbReference>
<dbReference type="AGR" id="WB:WBGene00011817"/>
<dbReference type="CTD" id="188562"/>
<dbReference type="WormBase" id="T16H12.9">
    <property type="protein sequence ID" value="CE41453"/>
    <property type="gene ID" value="WBGene00011817"/>
</dbReference>
<dbReference type="eggNOG" id="ENOG502S8KD">
    <property type="taxonomic scope" value="Eukaryota"/>
</dbReference>
<dbReference type="GeneTree" id="ENSGT00970000196012"/>
<dbReference type="HOGENOM" id="CLU_079992_0_0_1"/>
<dbReference type="InParanoid" id="P34572"/>
<dbReference type="OMA" id="SSCWVWR"/>
<dbReference type="OrthoDB" id="5867008at2759"/>
<dbReference type="PRO" id="PR:P34572"/>
<dbReference type="Proteomes" id="UP000001940">
    <property type="component" value="Chromosome III"/>
</dbReference>
<dbReference type="Bgee" id="WBGene00011817">
    <property type="expression patterns" value="Expressed in larva and 2 other cell types or tissues"/>
</dbReference>
<dbReference type="InterPro" id="IPR029034">
    <property type="entry name" value="Cystine-knot_cytokine"/>
</dbReference>
<dbReference type="PANTHER" id="PTHR33995:SF4">
    <property type="entry name" value="PROTEIN CBG09882"/>
    <property type="match status" value="1"/>
</dbReference>
<dbReference type="PANTHER" id="PTHR33995">
    <property type="entry name" value="PROTEIN CBG18546"/>
    <property type="match status" value="1"/>
</dbReference>
<dbReference type="SUPFAM" id="SSF57501">
    <property type="entry name" value="Cystine-knot cytokines"/>
    <property type="match status" value="1"/>
</dbReference>
<organism>
    <name type="scientific">Caenorhabditis elegans</name>
    <dbReference type="NCBI Taxonomy" id="6239"/>
    <lineage>
        <taxon>Eukaryota</taxon>
        <taxon>Metazoa</taxon>
        <taxon>Ecdysozoa</taxon>
        <taxon>Nematoda</taxon>
        <taxon>Chromadorea</taxon>
        <taxon>Rhabditida</taxon>
        <taxon>Rhabditina</taxon>
        <taxon>Rhabditomorpha</taxon>
        <taxon>Rhabditoidea</taxon>
        <taxon>Rhabditidae</taxon>
        <taxon>Peloderinae</taxon>
        <taxon>Caenorhabditis</taxon>
    </lineage>
</organism>
<evidence type="ECO:0000255" key="1"/>
<evidence type="ECO:0000256" key="2">
    <source>
        <dbReference type="SAM" id="MobiDB-lite"/>
    </source>
</evidence>
<evidence type="ECO:0000269" key="3">
    <source>
    </source>
</evidence>
<accession>P34572</accession>
<accession>Q23407</accession>
<name>YNV9_CAEEL</name>
<proteinExistence type="evidence at protein level"/>
<gene>
    <name type="ORF">T16H12.9</name>
</gene>
<feature type="signal peptide" evidence="1">
    <location>
        <begin position="1"/>
        <end position="24"/>
    </location>
</feature>
<feature type="chain" id="PRO_0000065468" description="Uncharacterized protein T16H12.9">
    <location>
        <begin position="25"/>
        <end position="303"/>
    </location>
</feature>
<feature type="region of interest" description="Disordered" evidence="2">
    <location>
        <begin position="124"/>
        <end position="179"/>
    </location>
</feature>
<feature type="compositionally biased region" description="Acidic residues" evidence="2">
    <location>
        <begin position="135"/>
        <end position="149"/>
    </location>
</feature>
<feature type="compositionally biased region" description="Basic residues" evidence="2">
    <location>
        <begin position="155"/>
        <end position="164"/>
    </location>
</feature>
<feature type="compositionally biased region" description="Polar residues" evidence="2">
    <location>
        <begin position="167"/>
        <end position="178"/>
    </location>
</feature>
<feature type="glycosylation site" description="N-linked (GlcNAc...) asparagine" evidence="3">
    <location>
        <position position="116"/>
    </location>
</feature>